<evidence type="ECO:0000269" key="1">
    <source>
    </source>
</evidence>
<evidence type="ECO:0000269" key="2">
    <source>
    </source>
</evidence>
<evidence type="ECO:0000269" key="3">
    <source>
    </source>
</evidence>
<evidence type="ECO:0000269" key="4">
    <source>
    </source>
</evidence>
<evidence type="ECO:0000269" key="5">
    <source>
    </source>
</evidence>
<evidence type="ECO:0000269" key="6">
    <source>
    </source>
</evidence>
<evidence type="ECO:0000269" key="7">
    <source>
    </source>
</evidence>
<evidence type="ECO:0000269" key="8">
    <source>
    </source>
</evidence>
<evidence type="ECO:0000269" key="9">
    <source>
    </source>
</evidence>
<evidence type="ECO:0000269" key="10">
    <source>
    </source>
</evidence>
<evidence type="ECO:0000269" key="11">
    <source>
    </source>
</evidence>
<evidence type="ECO:0000269" key="12">
    <source>
    </source>
</evidence>
<evidence type="ECO:0000269" key="13">
    <source>
    </source>
</evidence>
<evidence type="ECO:0000269" key="14">
    <source>
    </source>
</evidence>
<evidence type="ECO:0000269" key="15">
    <source>
    </source>
</evidence>
<evidence type="ECO:0000269" key="16">
    <source>
    </source>
</evidence>
<evidence type="ECO:0000269" key="17">
    <source>
    </source>
</evidence>
<evidence type="ECO:0000269" key="18">
    <source>
    </source>
</evidence>
<evidence type="ECO:0000269" key="19">
    <source>
    </source>
</evidence>
<evidence type="ECO:0000269" key="20">
    <source>
    </source>
</evidence>
<evidence type="ECO:0000269" key="21">
    <source>
    </source>
</evidence>
<evidence type="ECO:0000305" key="22"/>
<evidence type="ECO:0000305" key="23">
    <source>
    </source>
</evidence>
<evidence type="ECO:0000305" key="24">
    <source>
    </source>
</evidence>
<evidence type="ECO:0000305" key="25">
    <source>
    </source>
</evidence>
<evidence type="ECO:0000305" key="26">
    <source>
    </source>
</evidence>
<evidence type="ECO:0000305" key="27">
    <source>
    </source>
</evidence>
<evidence type="ECO:0000312" key="28">
    <source>
        <dbReference type="WormBase" id="C32D5.9"/>
    </source>
</evidence>
<evidence type="ECO:0007829" key="29">
    <source>
        <dbReference type="PDB" id="5AZF"/>
    </source>
</evidence>
<evidence type="ECO:0007829" key="30">
    <source>
        <dbReference type="PDB" id="5AZG"/>
    </source>
</evidence>
<comment type="function">
    <text evidence="1 3 5 6 8 9 12 13 14 15 19 21">Ubiquitin-like modifier involved in the formation of autophagosomal vacuoles (autophagosomes) (PubMed:26687600, PubMed:37395461). When lipidated mediates tethering between adjacent membranes and stimulates membrane fusion during autophagy (PubMed:21802374, PubMed:26687600, PubMed:37395461). Recruits lipidated-lgg-2 to maturing autophagosomes (PubMed:12958363, PubMed:20523114, PubMed:26687600). Acts in the aggrephagy pathway, which is the macroautophagic degradation of ubiquitinated protein aggregates, and preferentially interacts with autophagy proteins and substrates containing LIR motifs to mediate autophagosome formation and protein aggregate degradation (PubMed:26687600). In particular, binds to components of the unc-51-atg-13 complex to regulate autophagosome formation and cargo sequestration (PubMed:26687600). Required for the degradation of specific sepa-1- and sqst-1-containing protein aggregates during embryogenesis (PubMed:26687600). Involved in allophagy, which is an autophagic process in which paternal mitochondria and organelles are degraded during fertilization, and moreover is required for the formation of lgg-2-positive allophagic autophagosomes in embryos (PubMed:24374177, PubMed:37395461). Involved in the clearance of apoptotic cells by promoting the delivery of engulfed apoptotic cells to the lysosome (PubMed:22451698). Plays a role in the distribution and clearance of germ cell specific P-granules from somatic cells (PubMed:19167332). Also plays a role in the autophagy-mediated degradation of ribosomal RNA and ribosomal proteins in lysosomes (PubMed:30102152). Involved in xenophagy, the autophagy-mediated degradation of pathogens and pathogen products, such as toxins (PubMed:27875098). Required for normal survival when exposed to pathogenic bacteria S.typhimurium probably by promoting autophagic degradation of intracellular S.typhimurium (PubMed:19667176). Also plays a role in membrane-pore repair (PubMed:27875098). Plays a role in mitophagy (PubMed:25896323, PubMed:37395461). Essential for dauer development and longevity, including longevity in response to moderate, short-term heat shock, also known as a hormetic heat shock (PubMed:12958363, PubMed:20523114, PubMed:28198373).</text>
</comment>
<comment type="subunit">
    <text evidence="3 14 18">Interacts with sepa-1 (via the LIR motifs); the interaction is direct (PubMed:19167332, PubMed:26687600). Interacts with allo-1 (via the LIR motif) (PubMed:29255173). Interacts with sqst-1 (via the LIR motifs); the interaction is direct (PubMed:26687600). Both lipidated and unlipidated forms interact with epg-7 (via the LIR motif); the interaction is direct (PubMed:26687600). Interacts with epg-2 (via the LIR motifs); the interaction is direct (PubMed:26687600). Interacts with atg-13; the interaction is direct (PubMed:26687600). Interacts with unc-51 (via the LIR motif); the interaction is direct (PubMed:26687600). Interacts with atg-7; the interaction is direct (PubMed:26687600). Interacts with atg-3 (PubMed:26687600). The interaction with atg-7 and atg-3 may be required for the lipidation of lgg-1 (PubMed:26687600).</text>
</comment>
<comment type="interaction">
    <interactant intactId="EBI-325374">
        <id>Q09490</id>
    </interactant>
    <interactant intactId="EBI-317221">
        <id>Q17740</id>
        <label>ain-1</label>
    </interactant>
    <organismsDiffer>false</organismsDiffer>
    <experiments>3</experiments>
</comment>
<comment type="interaction">
    <interactant intactId="EBI-325374">
        <id>Q09490</id>
    </interactant>
    <interactant intactId="EBI-331850">
        <id>K8ESC5-2</id>
        <label>atg-4.1</label>
    </interactant>
    <organismsDiffer>false</organismsDiffer>
    <experiments>3</experiments>
</comment>
<comment type="interaction">
    <interactant intactId="EBI-325374">
        <id>Q09490</id>
    </interactant>
    <interactant intactId="EBI-2256317">
        <id>G5EC37</id>
        <label>sepa-1</label>
    </interactant>
    <organismsDiffer>false</organismsDiffer>
    <experiments>3</experiments>
</comment>
<comment type="subcellular location">
    <subcellularLocation>
        <location evidence="1 2">Preautophagosomal structure</location>
    </subcellularLocation>
    <subcellularLocation>
        <location evidence="1 6 21">Cytoplasmic vesicle</location>
        <location evidence="1 6 21">Autophagosome</location>
    </subcellularLocation>
    <subcellularLocation>
        <location evidence="12 21">Cytoplasmic vesicle</location>
        <location evidence="12 21">Autophagosome membrane</location>
    </subcellularLocation>
    <subcellularLocation>
        <location evidence="12">Lysosome lumen</location>
    </subcellularLocation>
    <subcellularLocation>
        <location evidence="13">Mitochondrion</location>
    </subcellularLocation>
    <subcellularLocation>
        <location evidence="3 4 7 8 12 17 18">Cytoplasm</location>
    </subcellularLocation>
    <subcellularLocation>
        <location evidence="9">Cytoplasmic vesicle</location>
        <location evidence="9">Phagosome membrane</location>
    </subcellularLocation>
    <subcellularLocation>
        <location evidence="11 14">Cell membrane</location>
        <topology evidence="14">Lipid-anchor</topology>
    </subcellularLocation>
    <subcellularLocation>
        <location evidence="20">Cell projection</location>
        <location evidence="20">Dendrite</location>
    </subcellularLocation>
    <subcellularLocation>
        <location evidence="20">Perikaryon</location>
    </subcellularLocation>
    <text evidence="3 4 7 9 12 17 21">In embryos, diffuse cytoplasmic localization with some areas displaying a more punctate distribution (PubMed:19167332, PubMed:19377305, PubMed:20550938, PubMed:24374177, PubMed:28806108). Specifically, upon fertilization localizes to autophagosomes around the male pronucleus (PubMed:24374177). During the first embryonic divisions and after the 25-cell stage, localizes to a large population of autophagosomes, with another smaller population of autophagosomes containing both lgg-1 and lgg-2 (PubMed:24374177). Localization to autophagosomes is dependent on atg-7 (PubMed:24374177). Co-localizes with sepa-1 in cytoplasmic aggregates (PubMed:19167332, PubMed:28806108, PubMed:37395461). Partially localizes to the phagosome membrane of engulfed apoptotic cells (PubMed:22451698).</text>
</comment>
<comment type="tissue specificity">
    <text evidence="2 20">Expressed in PLML touch receptor neuron and in the ventral nerve cord (PubMed:17327275). Expressed in AIY interneurons (PubMed:30880001).</text>
</comment>
<comment type="developmental stage">
    <text evidence="3 7 10 11 12 14 17 21">Expressed during embryogenesis (PubMed:19167332, PubMed:20550938, PubMed:24185444, PubMed:24374177, PubMed:26687600, PubMed:28806108, PubMed:37395461). First expressed at the 20 cell stage with expression peaking at the 80-100 cell stage, and decreasing as development continues (PubMed:20550938, PubMed:22767594, PubMed:24185444, PubMed:28806108). Undetectable at the comma stage (PubMed:28806108).</text>
</comment>
<comment type="induction">
    <text evidence="16">Induced in response to a moderate, short-term heat stess, also known as a hormetic heat stess.</text>
</comment>
<comment type="PTM">
    <text evidence="10 14 20 21 23 24 25 26 27">Cleaved by atg-4.1 and/or atg-4.2, after Gly-116 to form a thioester bond with 'Cys-523' of atg-7 (E1-like activating enzyme) before being transferred to 'Cys-255' of atg-3 (E2 conjugating enzyme), in order to be amidated with phosphatidylethanolamine (Probable) (PubMed:22767594, PubMed:26687600). This lipid modification anchors lgg-1 to membranes and can be reversed by atg-4.2, releasing soluble lgg-1 (PubMed:30880001). C-terminal cleavage is essential for autophagosome initiation and biogenesis (PubMed:37395461). Lipidation is not essential for autophagy or development but the lipidated form is involved in cargo recognition and autophagosome biogenesis (PubMed:37395461). Lipidation regulates lgg-2-positive autophagosome formation (PubMed:26687600, PubMed:37395461).</text>
</comment>
<comment type="disruption phenotype">
    <text evidence="2 3 5 13 14 15 16 21">Decreases viability and stress-induced survival rates (PubMed:37395461). Lacks autophagosome puncta (PubMed:37395461). Increases lethality during late embryogenesis and first larval stage (PubMed:37395461). Defective in sequestering paternal mitochondria and subsequent allophagy, which persists in the embryo after the 15-cell stage (PubMed:37395461). Impairs lgg-2 autophagosome clustering but instead forms scattered puncta in the embryo (PubMed:37395461). RNAi-mediated knockdown prevents mitophagy (PubMed:25896323). Accumulation of germ cell specific P-granules in somatic cells as indicated by increased numbers of pgl-1 and pgl-3 positive granules in embryos and L1 stage larva (PubMed:19167332). RNAi-mediated knockdown results in increased numbers of sepa-1- and lgg-2-expressing protein aggregates in embryos (PubMed:26687600). RNAi-mediated knockdown reduces autophagic degradation of membrane pore-forming toxin Cry5B (PubMed:27875098). RNAi-mediated knockdown results in higher number of omegasomes and lesser phagophores in embryos (PubMed:37395461). RNAi-mediated knockdown leads to defects in phagophore extension (PubMed:37395461). Impaired survival when exposed to pathogenic bacteria S.typhimurium (PubMed:19667176). Reduces the number of vacuolated (dying) touch receptor neurons in a mec-4 u231, deg-1 u506 or deg-3 u662 mutants (PubMed:17327275). The extended lifespan of animals exposed to hormetic heat shock early in life is significantly reduced by RNAi-mediated knockdown.</text>
</comment>
<comment type="similarity">
    <text evidence="22">Belongs to the ATG8 family.</text>
</comment>
<reference key="1">
    <citation type="journal article" date="1998" name="Science">
        <title>Genome sequence of the nematode C. elegans: a platform for investigating biology.</title>
        <authorList>
            <consortium name="The C. elegans sequencing consortium"/>
        </authorList>
    </citation>
    <scope>NUCLEOTIDE SEQUENCE [LARGE SCALE GENOMIC DNA]</scope>
    <source>
        <strain>Bristol N2</strain>
    </source>
</reference>
<reference key="2">
    <citation type="submission" date="2000-12" db="EMBL/GenBank/DDBJ databases">
        <title>The Caenorhabditis elegans transcriptome project, a complementary view of the genome.</title>
        <authorList>
            <person name="Kohara Y."/>
            <person name="Shin-i T."/>
            <person name="Suzuki Y."/>
            <person name="Sugano S."/>
            <person name="Potdevin M."/>
            <person name="Thierry-Mieg Y."/>
            <person name="Thierry-Mieg D."/>
            <person name="Thierry-Mieg J."/>
        </authorList>
    </citation>
    <scope>NUCLEOTIDE SEQUENCE [LARGE SCALE MRNA]</scope>
    <source>
        <strain>Bristol N2</strain>
    </source>
</reference>
<reference key="3">
    <citation type="journal article" date="2003" name="Science">
        <title>Autophagy genes are essential for dauer development and life-span extension in C. elegans.</title>
        <authorList>
            <person name="Melendez A."/>
            <person name="Talloczy Z."/>
            <person name="Seaman M."/>
            <person name="Eskelinen E.L."/>
            <person name="Hall D.H."/>
            <person name="Levine B."/>
        </authorList>
    </citation>
    <scope>FUNCTION</scope>
    <scope>SUBCELLULAR LOCATION</scope>
</reference>
<reference key="4">
    <citation type="journal article" date="2007" name="J. Cell Sci.">
        <title>Influence of autophagy genes on ion-channel-dependent neuronal degeneration in Caenorhabditis elegans.</title>
        <authorList>
            <person name="Toth M.L."/>
            <person name="Simon P."/>
            <person name="Kovacs A.L."/>
            <person name="Vellai T."/>
        </authorList>
    </citation>
    <scope>SUBCELLULAR LOCATION</scope>
    <scope>TISSUE SPECIFICITY</scope>
    <scope>DISRUPTION PHENOTYPE</scope>
</reference>
<reference key="5">
    <citation type="journal article" date="2009" name="Autophagy">
        <title>epg-1 functions in autophagy-regulated processes and may encode a highly divergent Atg13 homolog in C. elegans.</title>
        <authorList>
            <person name="Tian E."/>
            <person name="Wang F."/>
            <person name="Han J."/>
            <person name="Zhang H."/>
        </authorList>
    </citation>
    <scope>SUBCELLULAR LOCATION</scope>
</reference>
<reference key="6">
    <citation type="journal article" date="2009" name="Cell">
        <title>SEPA-1 mediates the specific recognition and degradation of P granule components by autophagy in C. elegans.</title>
        <authorList>
            <person name="Zhang Y."/>
            <person name="Yan L."/>
            <person name="Zhou Z."/>
            <person name="Yang P."/>
            <person name="Tian E."/>
            <person name="Zhang K."/>
            <person name="Zhao Y."/>
            <person name="Li Z."/>
            <person name="Song B."/>
            <person name="Han J."/>
            <person name="Miao L."/>
            <person name="Zhang H."/>
        </authorList>
    </citation>
    <scope>FUNCTION</scope>
    <scope>INTERACTION WITH SEPA-1</scope>
    <scope>SUBCELLULAR LOCATION</scope>
    <scope>DEVELOPMENTAL STAGE</scope>
    <scope>DISRUPTION PHENOTYPE</scope>
</reference>
<reference key="7">
    <citation type="journal article" date="2009" name="Proc. Natl. Acad. Sci. U.S.A.">
        <title>Autophagy genes protect against Salmonella typhimurium infection and mediate insulin signaling-regulated pathogen resistance.</title>
        <authorList>
            <person name="Jia K."/>
            <person name="Thomas C."/>
            <person name="Akbar M."/>
            <person name="Sun Q."/>
            <person name="Adams-Huet B."/>
            <person name="Gilpin C."/>
            <person name="Levine B."/>
        </authorList>
    </citation>
    <scope>FUNCTION</scope>
    <scope>DISRUPTION PHENOTYPE</scope>
</reference>
<reference key="8">
    <citation type="journal article" date="2010" name="Autophagy">
        <title>The autophagosomal protein LGG-2 acts synergistically with LGG-1 in dauer formation and longevity in C. elegans.</title>
        <authorList>
            <person name="Alberti A."/>
            <person name="Michelet X."/>
            <person name="Djeddi A."/>
            <person name="Legouis R."/>
        </authorList>
    </citation>
    <scope>FUNCTION</scope>
    <scope>SUBCELLULAR LOCATION</scope>
</reference>
<reference key="9">
    <citation type="journal article" date="2010" name="Cell">
        <title>C. elegans screen identifies autophagy genes specific to multicellular organisms.</title>
        <authorList>
            <person name="Tian Y."/>
            <person name="Li Z."/>
            <person name="Hu W."/>
            <person name="Ren H."/>
            <person name="Tian E."/>
            <person name="Zhao Y."/>
            <person name="Lu Q."/>
            <person name="Huang X."/>
            <person name="Yang P."/>
            <person name="Li X."/>
            <person name="Wang X."/>
            <person name="Kovacs A.L."/>
            <person name="Yu L."/>
            <person name="Zhang H."/>
        </authorList>
    </citation>
    <scope>SUBCELLULAR LOCATION</scope>
    <scope>DEVELOPMENTAL STAGE</scope>
    <scope>LIPIDATION AT GLY-116</scope>
</reference>
<reference key="10">
    <citation type="journal article" date="2011" name="Dev. Cell">
        <title>The WD40 repeat PtdIns(3)P-binding protein EPG-6 regulates progression of omegasomes to autophagosomes.</title>
        <authorList>
            <person name="Lu Q."/>
            <person name="Yang P."/>
            <person name="Huang X."/>
            <person name="Hu W."/>
            <person name="Guo B."/>
            <person name="Wu F."/>
            <person name="Lin L."/>
            <person name="Kovacs A.L."/>
            <person name="Yu L."/>
            <person name="Zhang H."/>
        </authorList>
    </citation>
    <scope>FUNCTION</scope>
    <scope>SUBCELLULAR LOCATION</scope>
    <scope>LIPIDATION AT GLY-116</scope>
</reference>
<reference key="11">
    <citation type="journal article" date="2012" name="J. Biol. Chem.">
        <title>Differential function of the two Atg4 homologues in the aggrephagy pathway in Caenorhabditis elegans.</title>
        <authorList>
            <person name="Wu F."/>
            <person name="Li Y."/>
            <person name="Wang F."/>
            <person name="Noda N.N."/>
            <person name="Zhang H."/>
        </authorList>
    </citation>
    <scope>DEVELOPMENTAL STAGE</scope>
    <scope>LIPIDATION</scope>
    <scope>PROTEOLYTIC CLEAVAGE</scope>
    <scope>MUTAGENESIS OF GLY-116</scope>
</reference>
<reference key="12">
    <citation type="journal article" date="2012" name="J. Cell Biol.">
        <title>Autophagy genes function sequentially to promote apoptotic cell corpse degradation in the engulfing cell.</title>
        <authorList>
            <person name="Li W."/>
            <person name="Zou W."/>
            <person name="Yang Y."/>
            <person name="Chai Y."/>
            <person name="Chen B."/>
            <person name="Cheng S."/>
            <person name="Tian D."/>
            <person name="Wang X."/>
            <person name="Vale R.D."/>
            <person name="Ou G."/>
        </authorList>
    </citation>
    <scope>FUNCTION</scope>
    <scope>SUBCELLULAR LOCATION</scope>
</reference>
<reference key="13">
    <citation type="journal article" date="2013" name="Autophagy">
        <title>The two C. elegans ATG-16 homologs have partially redundant functions in the basal autophagy pathway.</title>
        <authorList>
            <person name="Zhang H."/>
            <person name="Wu F."/>
            <person name="Wang X."/>
            <person name="Du H."/>
            <person name="Wang X."/>
            <person name="Zhang H."/>
        </authorList>
    </citation>
    <scope>SUBCELLULAR LOCATION</scope>
    <scope>DEVELOPMENTAL STAGE</scope>
    <scope>LIPIDATION</scope>
</reference>
<reference key="14">
    <citation type="journal article" date="2014" name="Dev. Cell">
        <title>The C. elegans LC3 acts downstream of GABARAP to degrade autophagosomes by interacting with the HOPS subunit VPS39.</title>
        <authorList>
            <person name="Manil-Segalen M."/>
            <person name="Lefebvre C."/>
            <person name="Jenzer C."/>
            <person name="Trichet M."/>
            <person name="Boulogne C."/>
            <person name="Satiat-Jeunemaitre B."/>
            <person name="Legouis R."/>
        </authorList>
    </citation>
    <scope>FUNCTION</scope>
    <scope>SUBCELLULAR LOCATION</scope>
    <scope>DEVELOPMENTAL STAGE</scope>
    <scope>MUTAGENESIS OF GLY-116</scope>
</reference>
<reference key="15">
    <citation type="journal article" date="2014" name="EMBO Rep.">
        <title>PI3P phosphatase activity is required for autophagosome maturation and autolysosome formation.</title>
        <authorList>
            <person name="Wu Y."/>
            <person name="Cheng S."/>
            <person name="Zhao H."/>
            <person name="Zou W."/>
            <person name="Yoshina S."/>
            <person name="Mitani S."/>
            <person name="Zhang H."/>
            <person name="Wang X."/>
        </authorList>
    </citation>
    <scope>LIPIDATION</scope>
</reference>
<reference key="16">
    <citation type="journal article" date="2015" name="Nature">
        <title>Coordination of mitophagy and mitochondrial biogenesis during ageing in C. elegans.</title>
        <authorList>
            <person name="Palikaras K."/>
            <person name="Lionaki E."/>
            <person name="Tavernarakis N."/>
        </authorList>
    </citation>
    <scope>FUNCTION</scope>
    <scope>SUBCELLULAR LOCATION</scope>
    <scope>DISRUPTION PHENOTYPE</scope>
</reference>
<reference key="17">
    <citation type="journal article" date="2017" name="Autophagy">
        <title>HLH-30/TFEB-mediated autophagy functions in a cell-autonomous manner for epithelium intrinsic cellular defense against bacterial pore-forming toxin in C. elegans.</title>
        <authorList>
            <person name="Chen H.D."/>
            <person name="Kao C.Y."/>
            <person name="Liu B.Y."/>
            <person name="Huang S.W."/>
            <person name="Kuo C.J."/>
            <person name="Ruan J.W."/>
            <person name="Lin Y.H."/>
            <person name="Huang C.R."/>
            <person name="Chen Y.H."/>
            <person name="Wang H.D."/>
            <person name="Aroian R.V."/>
            <person name="Chen C.S."/>
        </authorList>
    </citation>
    <scope>FUNCTION</scope>
    <scope>DISRUPTION PHENOTYPE</scope>
</reference>
<reference key="18">
    <citation type="journal article" date="2017" name="Autophagy">
        <title>The composition of a protein aggregate modulates the specificity and efficiency of its autophagic degradation.</title>
        <authorList>
            <person name="Zhang G."/>
            <person name="Lin L."/>
            <person name="Qi D."/>
            <person name="Zhang H."/>
        </authorList>
    </citation>
    <scope>SUBCELLULAR LOCATION</scope>
    <scope>DEVELOPMENTAL STAGE</scope>
</reference>
<reference key="19">
    <citation type="journal article" date="2017" name="Nat. Commun.">
        <title>Hormetic heat stress and HSF-1 induce autophagy to improve survival and proteostasis in C. elegans.</title>
        <authorList>
            <person name="Kumsta C."/>
            <person name="Chang J.T."/>
            <person name="Schmalz J."/>
            <person name="Hansen M."/>
        </authorList>
    </citation>
    <scope>FUNCTION</scope>
    <scope>INDUCTION</scope>
    <scope>DISRUPTION PHENOTYPE</scope>
</reference>
<reference key="20">
    <citation type="journal article" date="2018" name="Elife">
        <title>Autophagy-dependent ribosomal RNA degradation is essential for maintaining nucleotide homeostasis during C. elegans development.</title>
        <authorList>
            <person name="Liu Y."/>
            <person name="Zou W."/>
            <person name="Yang P."/>
            <person name="Wang L."/>
            <person name="Ma Y."/>
            <person name="Zhang H."/>
            <person name="Wang X."/>
        </authorList>
    </citation>
    <scope>FUNCTION</scope>
    <scope>MUTAGENESIS OF 94-LEU--GLU-123</scope>
</reference>
<reference key="21">
    <citation type="journal article" date="2018" name="Nat. Cell Biol.">
        <title>The autophagy receptor ALLO-1 and the IKKE-1 kinase control clearance of paternal mitochondria in Caenorhabditis elegans.</title>
        <authorList>
            <person name="Sato M."/>
            <person name="Sato K."/>
            <person name="Tomura K."/>
            <person name="Kosako H."/>
            <person name="Sato K."/>
        </authorList>
    </citation>
    <scope>INTERACTION WITH ALLO-1</scope>
    <scope>SUBCELLULAR LOCATION</scope>
</reference>
<reference key="22">
    <citation type="journal article" date="2019" name="Dev. Cell">
        <title>Maturation and Clearance of Autophagosomes in Neurons Depends on a Specific Cysteine Protease Isoform, ATG-4.2.</title>
        <authorList>
            <person name="Hill S.E."/>
            <person name="Kauffman K.J."/>
            <person name="Krout M."/>
            <person name="Richmond J.E."/>
            <person name="Melia T.J."/>
            <person name="Colon-Ramos D.A."/>
        </authorList>
    </citation>
    <scope>SUBCELLULAR LOCATION</scope>
    <scope>LIPIDATION</scope>
</reference>
<reference evidence="22" key="23">
    <citation type="journal article" date="2023" name="Elife">
        <title>LGG-1/GABARAP lipidation is not required for autophagy and development in Caenorhabditis elegans.</title>
        <authorList>
            <person name="Leboutet R."/>
            <person name="Largeau C."/>
            <person name="Mueller L."/>
            <person name="Prigent M."/>
            <person name="Quinet G."/>
            <person name="Rodriguez M.S."/>
            <person name="Cuif M.H."/>
            <person name="Hoppe T."/>
            <person name="Culetto E."/>
            <person name="Lefebvre C."/>
            <person name="Legouis R."/>
        </authorList>
    </citation>
    <scope>FUNCTION</scope>
    <scope>SUBCELLULAR LOCATION</scope>
    <scope>DEVELOPMENTAL STAGE</scope>
    <scope>LIPIDATION</scope>
    <scope>DISRUPTION PHENOTYPE</scope>
    <scope>MUTAGENESIS OF 100-GLU--GLU-123; 112-GLU--GLU-123; 116-GLY-GLY-117; GLY-116 AND 117-GLY--GLU-123</scope>
</reference>
<reference key="24">
    <citation type="journal article" date="2015" name="Mol. Cell">
        <title>Structural Basis of the Differential Function of the Two C. elegans Atg8 Homologs, LGG-1 and LGG-2, in Autophagy.</title>
        <authorList>
            <person name="Wu F."/>
            <person name="Watanabe Y."/>
            <person name="Guo X.Y."/>
            <person name="Qi X."/>
            <person name="Wang P."/>
            <person name="Zhao H.Y."/>
            <person name="Wang Z."/>
            <person name="Fujioka Y."/>
            <person name="Zhang H."/>
            <person name="Ren J.Q."/>
            <person name="Fang T.C."/>
            <person name="Shen Y.X."/>
            <person name="Feng W."/>
            <person name="Hu J.J."/>
            <person name="Noda N.N."/>
            <person name="Zhang H."/>
        </authorList>
    </citation>
    <scope>X-RAY CRYSTALLOGRAPHY (1.60 ANGSTROMS) OF 1-116 IN COMPLEX WITH WEEL PEPTIDE</scope>
    <scope>FUNCTION</scope>
    <scope>INTERACTION WITH SEPA-1; SQST-1; EPG-7; EPG-2; ATG-13; UNC-51; ATG-7 AND ATG-3</scope>
    <scope>SUBCELLULAR LOCATION</scope>
    <scope>DEVELOPMENTAL STAGE</scope>
    <scope>LIPIDATION</scope>
    <scope>DISRUPTION PHENOTYPE</scope>
    <scope>MUTAGENESIS OF LYS-2; 3-TRP-ALA-4; TRP-3; GLU-7; 14-ARG-ARG-15; ARG-28; 94-LEU--GLU-123; ASP-102; ALA-108; 116-GLY--GLU-123 AND GLY-116</scope>
</reference>
<accession>Q09490</accession>
<feature type="chain" id="PRO_0000438282" description="Protein lgg-1">
    <location>
        <begin position="1"/>
        <end position="116"/>
    </location>
</feature>
<feature type="propeptide" id="PRO_0000212377" description="Removed in mature form" evidence="23 24">
    <location>
        <begin position="117"/>
        <end position="123"/>
    </location>
</feature>
<feature type="site" description="Required for the interaction with unc-51" evidence="14">
    <location>
        <position position="25"/>
    </location>
</feature>
<feature type="site" description="Required for interaction with sqst-1" evidence="14">
    <location>
        <position position="28"/>
    </location>
</feature>
<feature type="site" description="Required for the interaction with unc-51" evidence="14">
    <location>
        <position position="50"/>
    </location>
</feature>
<feature type="site" description="Required for the interaction with unc-51" evidence="14">
    <location>
        <position position="104"/>
    </location>
</feature>
<feature type="site" description="Cleavage" evidence="10 23 24">
    <location>
        <begin position="116"/>
        <end position="117"/>
    </location>
</feature>
<feature type="lipid moiety-binding region" description="Phosphatidylethanolamine amidated glycine" evidence="10 23 24">
    <location>
        <position position="116"/>
    </location>
</feature>
<feature type="mutagenesis site" description="Mildly impaired membrane tethering activity and fusion in vitro." evidence="14">
    <original>K</original>
    <variation>A</variation>
    <location>
        <position position="2"/>
    </location>
</feature>
<feature type="mutagenesis site" description="Impaired membrane tethering activity and fusion in vitro." evidence="14">
    <original>WA</original>
    <variation>GG</variation>
    <location>
        <begin position="3"/>
        <end position="4"/>
    </location>
</feature>
<feature type="mutagenesis site" description="Does not rescue the protein aggregate degradation defect in the lgg-1 bp500 mutant." evidence="14">
    <original>W</original>
    <variation>G</variation>
    <location>
        <position position="3"/>
    </location>
</feature>
<feature type="mutagenesis site" description="Mildly impaired membrane tethering activity and fusion in vitro." evidence="14">
    <original>E</original>
    <variation>A</variation>
    <location>
        <position position="7"/>
    </location>
</feature>
<feature type="mutagenesis site" description="Severely impaired membrane tethering activity and fusion in vitro. Does not rescue the degradation defect in the lgg-1 bp500 mutant." evidence="14">
    <original>RR</original>
    <variation>AA</variation>
    <location>
        <begin position="14"/>
        <end position="15"/>
    </location>
</feature>
<feature type="mutagenesis site" description="In bp523; abolishes interaction with sqst-1 and impairs the interaction with epg-7, sepa-1 and unc-51. Defective degradation of sepa-1- and sqst-1-containing aggregates in embryos. No defects in lipidation or puncta formation." evidence="14">
    <original>R</original>
    <variation>C</variation>
    <location>
        <position position="28"/>
    </location>
</feature>
<feature type="mutagenesis site" description="In bp500; defective degradation of sepa-1-containing protein aggregates in comma stage embryos. Suppresses the lysosomal accumulation of ribosomal RNA and ribosomal proteins in the rnst-2 qx245 mutant." evidence="14 19">
    <location>
        <begin position="94"/>
        <end position="123"/>
    </location>
</feature>
<feature type="mutagenesis site" description="Decreases viability and stress-induced survival rates. Does not form autophagosome puncta but instead appears diffuse in the cytosol." evidence="21">
    <location>
        <begin position="100"/>
        <end position="123"/>
    </location>
</feature>
<feature type="mutagenesis site" description="Defective degradation of sepa-1-containing protein aggregates in embryos." evidence="14">
    <original>D</original>
    <variation>A</variation>
    <location>
        <position position="102"/>
    </location>
</feature>
<feature type="mutagenesis site" description="Does not rescue the degradation defect in the lgg-1 bp500 mutant." evidence="14">
    <original>A</original>
    <variation>V</variation>
    <location>
        <position position="108"/>
    </location>
</feature>
<feature type="mutagenesis site" description="Decreases viability and stress-induced survival rates. Does not form autophagosome puncta but instead appears diffuse in the cytosol." evidence="21">
    <location>
        <begin position="112"/>
        <end position="123"/>
    </location>
</feature>
<feature type="mutagenesis site" description="Impairs interaction with atg-3. Rescues the protein degradation defect in the atg-4.1 bp501 and atg-4.2 tm3948 single mutants. Does not rescue the lethal phenotype of the atg-4.1 bp501 and atg-4.2 tm3948 double mutant, but partially rescues the protein degradation defect." evidence="10 14">
    <location>
        <begin position="116"/>
        <end position="123"/>
    </location>
</feature>
<feature type="mutagenesis site" description="Decreases viability and stress-induced survival rates. Does not form autophagosome puncta but instead appears diffuse in the cytosol. Defective allophagy, with paternal mitochondria persisting in the embryo after the 15-cell stage. Abolishes C-terminal cleavage. Lacks aggrephagy, the selective degradation of protein aggregates." evidence="21">
    <original>GG</original>
    <variation>AA</variation>
    <location>
        <begin position="116"/>
        <end position="117"/>
    </location>
</feature>
<feature type="mutagenesis site" description="Diffuse cytosolic localization in 500-cell embryos with no punctate pattern of distribution which is in contrast to wild-type. Not cleaved by atg-4.1 and atg-4.2. Does not rescue the protein degradation defect in the atg-4.1 bp501 mutant. Less efficient aggrephagy. Reduces lgg-2 lipidation and the accumulation of sqst-1-containing aggregates. Abolishes the interaction with atg-3. Does not decrease viability or stress-induced survival rates. Prevents conjugation to the autophagosome membrane. No effect on autophagy-related processes including mitophagy and allophagy with complete degradation of paternal mitochondria after the 15-cell embryonic stage. C-terminal cleavage still occurs but is less efficient. lgg-2 forms sparse heterogeneous structures. Increases lgg-2 autophagosome structures but with a delay in degradation. Reduces the overlap between lgg-2 puncta and sepa-1 in embryos." evidence="10 12 14 21">
    <original>G</original>
    <variation>A</variation>
    <location>
        <position position="116"/>
    </location>
</feature>
<feature type="mutagenesis site" description="Does not decrease viability or stress-induced survival rates. Does not form autophagosome puncta but instead appears diffuse in the cytosol. Defective in paternal mitochondria sequestering and allophagy, with paternal mitochondria persisting in the embryo after the 15-cell stage. lgg-2 forms sparse heterogeneous structures. Defective in phagophore extension. Lacks aggrephagy, the selective degradation of protein aggregates." evidence="21">
    <location>
        <begin position="117"/>
        <end position="123"/>
    </location>
</feature>
<feature type="helix" evidence="29">
    <location>
        <begin position="4"/>
        <end position="8"/>
    </location>
</feature>
<feature type="helix" evidence="29">
    <location>
        <begin position="11"/>
        <end position="24"/>
    </location>
</feature>
<feature type="strand" evidence="29">
    <location>
        <begin position="28"/>
        <end position="35"/>
    </location>
</feature>
<feature type="strand" evidence="29">
    <location>
        <begin position="47"/>
        <end position="51"/>
    </location>
</feature>
<feature type="helix" evidence="29">
    <location>
        <begin position="57"/>
        <end position="67"/>
    </location>
</feature>
<feature type="strand" evidence="30">
    <location>
        <begin position="72"/>
        <end position="74"/>
    </location>
</feature>
<feature type="strand" evidence="29">
    <location>
        <begin position="77"/>
        <end position="80"/>
    </location>
</feature>
<feature type="helix" evidence="29">
    <location>
        <begin position="91"/>
        <end position="98"/>
    </location>
</feature>
<feature type="strand" evidence="29">
    <location>
        <begin position="105"/>
        <end position="111"/>
    </location>
</feature>
<protein>
    <recommendedName>
        <fullName>Protein lgg-1</fullName>
    </recommendedName>
</protein>
<organism>
    <name type="scientific">Caenorhabditis elegans</name>
    <dbReference type="NCBI Taxonomy" id="6239"/>
    <lineage>
        <taxon>Eukaryota</taxon>
        <taxon>Metazoa</taxon>
        <taxon>Ecdysozoa</taxon>
        <taxon>Nematoda</taxon>
        <taxon>Chromadorea</taxon>
        <taxon>Rhabditida</taxon>
        <taxon>Rhabditina</taxon>
        <taxon>Rhabditomorpha</taxon>
        <taxon>Rhabditoidea</taxon>
        <taxon>Rhabditidae</taxon>
        <taxon>Peloderinae</taxon>
        <taxon>Caenorhabditis</taxon>
    </lineage>
</organism>
<gene>
    <name evidence="28" type="primary">lgg-1</name>
    <name evidence="28" type="synonym">atg-8.1</name>
    <name evidence="28" type="ORF">C32D5.9</name>
</gene>
<dbReference type="EMBL" id="BX284602">
    <property type="protein sequence ID" value="CCD66037.1"/>
    <property type="molecule type" value="Genomic_DNA"/>
</dbReference>
<dbReference type="EMBL" id="AF326943">
    <property type="protein sequence ID" value="AAG49393.1"/>
    <property type="molecule type" value="mRNA"/>
</dbReference>
<dbReference type="PIR" id="T15740">
    <property type="entry name" value="T15740"/>
</dbReference>
<dbReference type="RefSeq" id="NP_495277.1">
    <property type="nucleotide sequence ID" value="NM_062876.8"/>
</dbReference>
<dbReference type="PDB" id="5AZF">
    <property type="method" value="X-ray"/>
    <property type="resolution" value="1.60 A"/>
    <property type="chains" value="A/B=1-116"/>
</dbReference>
<dbReference type="PDB" id="5AZG">
    <property type="method" value="X-ray"/>
    <property type="resolution" value="1.81 A"/>
    <property type="chains" value="A/B=1-116"/>
</dbReference>
<dbReference type="PDB" id="8TGF">
    <property type="method" value="X-ray"/>
    <property type="resolution" value="1.60 A"/>
    <property type="chains" value="A=1-123"/>
</dbReference>
<dbReference type="PDB" id="8TGX">
    <property type="method" value="X-ray"/>
    <property type="resolution" value="2.62 A"/>
    <property type="chains" value="A=1-123"/>
</dbReference>
<dbReference type="PDBsum" id="5AZF"/>
<dbReference type="PDBsum" id="5AZG"/>
<dbReference type="PDBsum" id="8TGF"/>
<dbReference type="PDBsum" id="8TGX"/>
<dbReference type="SMR" id="Q09490"/>
<dbReference type="BioGRID" id="39390">
    <property type="interactions" value="79"/>
</dbReference>
<dbReference type="DIP" id="DIP-27176N"/>
<dbReference type="ELM" id="Q09490"/>
<dbReference type="FunCoup" id="Q09490">
    <property type="interactions" value="2717"/>
</dbReference>
<dbReference type="IntAct" id="Q09490">
    <property type="interactions" value="9"/>
</dbReference>
<dbReference type="MINT" id="Q09490"/>
<dbReference type="STRING" id="6239.C32D5.9.1"/>
<dbReference type="PaxDb" id="6239-C32D5.9"/>
<dbReference type="PeptideAtlas" id="Q09490"/>
<dbReference type="EnsemblMetazoa" id="C32D5.9.1">
    <property type="protein sequence ID" value="C32D5.9.1"/>
    <property type="gene ID" value="WBGene00002980"/>
</dbReference>
<dbReference type="GeneID" id="174050"/>
<dbReference type="KEGG" id="cel:CELE_C32D5.9"/>
<dbReference type="UCSC" id="C32D5.9.1">
    <property type="organism name" value="c. elegans"/>
</dbReference>
<dbReference type="AGR" id="WB:WBGene00002980"/>
<dbReference type="CTD" id="174050"/>
<dbReference type="WormBase" id="C32D5.9">
    <property type="protein sequence ID" value="CE01849"/>
    <property type="gene ID" value="WBGene00002980"/>
    <property type="gene designation" value="lgg-1"/>
</dbReference>
<dbReference type="eggNOG" id="KOG1654">
    <property type="taxonomic scope" value="Eukaryota"/>
</dbReference>
<dbReference type="GeneTree" id="ENSGT00940000168096"/>
<dbReference type="HOGENOM" id="CLU_119276_0_0_1"/>
<dbReference type="InParanoid" id="Q09490"/>
<dbReference type="OMA" id="AVYQEHK"/>
<dbReference type="OrthoDB" id="6738456at2759"/>
<dbReference type="PhylomeDB" id="Q09490"/>
<dbReference type="Reactome" id="R-CEL-1632852">
    <property type="pathway name" value="Macroautophagy"/>
</dbReference>
<dbReference type="PRO" id="PR:Q09490"/>
<dbReference type="Proteomes" id="UP000001940">
    <property type="component" value="Chromosome II"/>
</dbReference>
<dbReference type="Bgee" id="WBGene00002980">
    <property type="expression patterns" value="Expressed in embryo and 4 other cell types or tissues"/>
</dbReference>
<dbReference type="GO" id="GO:0005776">
    <property type="term" value="C:autophagosome"/>
    <property type="evidence" value="ECO:0000314"/>
    <property type="project" value="WormBase"/>
</dbReference>
<dbReference type="GO" id="GO:0000421">
    <property type="term" value="C:autophagosome membrane"/>
    <property type="evidence" value="ECO:0000314"/>
    <property type="project" value="WormBase"/>
</dbReference>
<dbReference type="GO" id="GO:0005737">
    <property type="term" value="C:cytoplasm"/>
    <property type="evidence" value="ECO:0000314"/>
    <property type="project" value="UniProtKB"/>
</dbReference>
<dbReference type="GO" id="GO:0030425">
    <property type="term" value="C:dendrite"/>
    <property type="evidence" value="ECO:0007669"/>
    <property type="project" value="UniProtKB-SubCell"/>
</dbReference>
<dbReference type="GO" id="GO:0043202">
    <property type="term" value="C:lysosomal lumen"/>
    <property type="evidence" value="ECO:0007669"/>
    <property type="project" value="UniProtKB-SubCell"/>
</dbReference>
<dbReference type="GO" id="GO:0005741">
    <property type="term" value="C:mitochondrial outer membrane"/>
    <property type="evidence" value="ECO:0000314"/>
    <property type="project" value="WormBase"/>
</dbReference>
<dbReference type="GO" id="GO:0043005">
    <property type="term" value="C:neuron projection"/>
    <property type="evidence" value="ECO:0000314"/>
    <property type="project" value="UniProtKB"/>
</dbReference>
<dbReference type="GO" id="GO:0043025">
    <property type="term" value="C:neuronal cell body"/>
    <property type="evidence" value="ECO:0000314"/>
    <property type="project" value="UniProtKB"/>
</dbReference>
<dbReference type="GO" id="GO:0005634">
    <property type="term" value="C:nucleus"/>
    <property type="evidence" value="ECO:0007005"/>
    <property type="project" value="WormBase"/>
</dbReference>
<dbReference type="GO" id="GO:0043204">
    <property type="term" value="C:perikaryon"/>
    <property type="evidence" value="ECO:0007669"/>
    <property type="project" value="UniProtKB-SubCell"/>
</dbReference>
<dbReference type="GO" id="GO:0030670">
    <property type="term" value="C:phagocytic vesicle membrane"/>
    <property type="evidence" value="ECO:0007669"/>
    <property type="project" value="UniProtKB-SubCell"/>
</dbReference>
<dbReference type="GO" id="GO:0000407">
    <property type="term" value="C:phagophore assembly site"/>
    <property type="evidence" value="ECO:0007669"/>
    <property type="project" value="UniProtKB-SubCell"/>
</dbReference>
<dbReference type="GO" id="GO:0005886">
    <property type="term" value="C:plasma membrane"/>
    <property type="evidence" value="ECO:0007669"/>
    <property type="project" value="UniProtKB-SubCell"/>
</dbReference>
<dbReference type="GO" id="GO:0050811">
    <property type="term" value="F:GABA receptor binding"/>
    <property type="evidence" value="ECO:0000318"/>
    <property type="project" value="GO_Central"/>
</dbReference>
<dbReference type="GO" id="GO:0008429">
    <property type="term" value="F:phosphatidylethanolamine binding"/>
    <property type="evidence" value="ECO:0000318"/>
    <property type="project" value="GO_Central"/>
</dbReference>
<dbReference type="GO" id="GO:0031625">
    <property type="term" value="F:ubiquitin protein ligase binding"/>
    <property type="evidence" value="ECO:0000318"/>
    <property type="project" value="GO_Central"/>
</dbReference>
<dbReference type="GO" id="GO:0000045">
    <property type="term" value="P:autophagosome assembly"/>
    <property type="evidence" value="ECO:0000318"/>
    <property type="project" value="GO_Central"/>
</dbReference>
<dbReference type="GO" id="GO:0097352">
    <property type="term" value="P:autophagosome maturation"/>
    <property type="evidence" value="ECO:0000318"/>
    <property type="project" value="GO_Central"/>
</dbReference>
<dbReference type="GO" id="GO:0006914">
    <property type="term" value="P:autophagy"/>
    <property type="evidence" value="ECO:0000316"/>
    <property type="project" value="WormBase"/>
</dbReference>
<dbReference type="GO" id="GO:0006995">
    <property type="term" value="P:cellular response to nitrogen starvation"/>
    <property type="evidence" value="ECO:0000318"/>
    <property type="project" value="GO_Central"/>
</dbReference>
<dbReference type="GO" id="GO:0097237">
    <property type="term" value="P:cellular response to toxic substance"/>
    <property type="evidence" value="ECO:0000315"/>
    <property type="project" value="UniProtKB"/>
</dbReference>
<dbReference type="GO" id="GO:0040024">
    <property type="term" value="P:dauer larval development"/>
    <property type="evidence" value="ECO:0000316"/>
    <property type="project" value="WormBase"/>
</dbReference>
<dbReference type="GO" id="GO:0050830">
    <property type="term" value="P:defense response to Gram-positive bacterium"/>
    <property type="evidence" value="ECO:0000270"/>
    <property type="project" value="WormBase"/>
</dbReference>
<dbReference type="GO" id="GO:0008340">
    <property type="term" value="P:determination of adult lifespan"/>
    <property type="evidence" value="ECO:0000315"/>
    <property type="project" value="UniProtKB"/>
</dbReference>
<dbReference type="GO" id="GO:0016236">
    <property type="term" value="P:macroautophagy"/>
    <property type="evidence" value="ECO:0000315"/>
    <property type="project" value="UniProtKB"/>
</dbReference>
<dbReference type="GO" id="GO:0000423">
    <property type="term" value="P:mitophagy"/>
    <property type="evidence" value="ECO:0000318"/>
    <property type="project" value="GO_Central"/>
</dbReference>
<dbReference type="GO" id="GO:0070266">
    <property type="term" value="P:necroptotic process"/>
    <property type="evidence" value="ECO:0000316"/>
    <property type="project" value="WormBase"/>
</dbReference>
<dbReference type="GO" id="GO:0001778">
    <property type="term" value="P:plasma membrane repair"/>
    <property type="evidence" value="ECO:0000315"/>
    <property type="project" value="UniProtKB"/>
</dbReference>
<dbReference type="GO" id="GO:2000786">
    <property type="term" value="P:positive regulation of autophagosome assembly"/>
    <property type="evidence" value="ECO:0000315"/>
    <property type="project" value="UniProtKB"/>
</dbReference>
<dbReference type="GO" id="GO:0012501">
    <property type="term" value="P:programmed cell death"/>
    <property type="evidence" value="ECO:0000316"/>
    <property type="project" value="WormBase"/>
</dbReference>
<dbReference type="GO" id="GO:0009408">
    <property type="term" value="P:response to heat"/>
    <property type="evidence" value="ECO:0000315"/>
    <property type="project" value="UniProtKB"/>
</dbReference>
<dbReference type="GO" id="GO:0098792">
    <property type="term" value="P:xenophagy"/>
    <property type="evidence" value="ECO:0000315"/>
    <property type="project" value="UniProtKB"/>
</dbReference>
<dbReference type="CDD" id="cd16127">
    <property type="entry name" value="Ubl_ATG8_GABARAP_like"/>
    <property type="match status" value="1"/>
</dbReference>
<dbReference type="FunFam" id="3.10.20.90:FF:000037">
    <property type="entry name" value="Gamma-aminobutyric acid receptor-associated protein-like 1"/>
    <property type="match status" value="1"/>
</dbReference>
<dbReference type="Gene3D" id="3.10.20.90">
    <property type="entry name" value="Phosphatidylinositol 3-kinase Catalytic Subunit, Chain A, domain 1"/>
    <property type="match status" value="1"/>
</dbReference>
<dbReference type="InterPro" id="IPR004241">
    <property type="entry name" value="Atg8-like"/>
</dbReference>
<dbReference type="InterPro" id="IPR029071">
    <property type="entry name" value="Ubiquitin-like_domsf"/>
</dbReference>
<dbReference type="PANTHER" id="PTHR10969">
    <property type="entry name" value="MICROTUBULE-ASSOCIATED PROTEINS 1A/1B LIGHT CHAIN 3-RELATED"/>
    <property type="match status" value="1"/>
</dbReference>
<dbReference type="Pfam" id="PF02991">
    <property type="entry name" value="ATG8"/>
    <property type="match status" value="1"/>
</dbReference>
<dbReference type="SUPFAM" id="SSF54236">
    <property type="entry name" value="Ubiquitin-like"/>
    <property type="match status" value="1"/>
</dbReference>
<proteinExistence type="evidence at protein level"/>
<name>LGG1_CAEEL</name>
<keyword id="KW-0002">3D-structure</keyword>
<keyword id="KW-0072">Autophagy</keyword>
<keyword id="KW-1003">Cell membrane</keyword>
<keyword id="KW-0966">Cell projection</keyword>
<keyword id="KW-0963">Cytoplasm</keyword>
<keyword id="KW-0968">Cytoplasmic vesicle</keyword>
<keyword id="KW-0449">Lipoprotein</keyword>
<keyword id="KW-0458">Lysosome</keyword>
<keyword id="KW-0472">Membrane</keyword>
<keyword id="KW-0496">Mitochondrion</keyword>
<keyword id="KW-1185">Reference proteome</keyword>
<sequence>MKWAYKEENNFEKRRAEGDKIRRKYPDRIPVIVEKAPKSKLHDLDKKKYLVPSDLTVGQFYFLIRKRIQLRPEDALFFFVNNVIPQTMTTMGQLYQDHHEEDLFLYIAYSDESVYGGEVEKKE</sequence>